<feature type="chain" id="PRO_0000387062" description="Ribosomal RNA small subunit methyltransferase H">
    <location>
        <begin position="1"/>
        <end position="333"/>
    </location>
</feature>
<feature type="binding site" evidence="1">
    <location>
        <begin position="42"/>
        <end position="44"/>
    </location>
    <ligand>
        <name>S-adenosyl-L-methionine</name>
        <dbReference type="ChEBI" id="CHEBI:59789"/>
    </ligand>
</feature>
<feature type="binding site" evidence="1">
    <location>
        <position position="62"/>
    </location>
    <ligand>
        <name>S-adenosyl-L-methionine</name>
        <dbReference type="ChEBI" id="CHEBI:59789"/>
    </ligand>
</feature>
<feature type="binding site" evidence="1">
    <location>
        <position position="86"/>
    </location>
    <ligand>
        <name>S-adenosyl-L-methionine</name>
        <dbReference type="ChEBI" id="CHEBI:59789"/>
    </ligand>
</feature>
<feature type="binding site" evidence="1">
    <location>
        <position position="105"/>
    </location>
    <ligand>
        <name>S-adenosyl-L-methionine</name>
        <dbReference type="ChEBI" id="CHEBI:59789"/>
    </ligand>
</feature>
<feature type="binding site" evidence="1">
    <location>
        <position position="112"/>
    </location>
    <ligand>
        <name>S-adenosyl-L-methionine</name>
        <dbReference type="ChEBI" id="CHEBI:59789"/>
    </ligand>
</feature>
<dbReference type="EC" id="2.1.1.199" evidence="1"/>
<dbReference type="EMBL" id="AM260479">
    <property type="protein sequence ID" value="CAJ94355.1"/>
    <property type="molecule type" value="Genomic_DNA"/>
</dbReference>
<dbReference type="RefSeq" id="WP_010814777.1">
    <property type="nucleotide sequence ID" value="NZ_CP039287.1"/>
</dbReference>
<dbReference type="SMR" id="Q0K6L6"/>
<dbReference type="STRING" id="381666.H16_A3281"/>
<dbReference type="KEGG" id="reh:H16_A3281"/>
<dbReference type="eggNOG" id="COG0275">
    <property type="taxonomic scope" value="Bacteria"/>
</dbReference>
<dbReference type="HOGENOM" id="CLU_038422_2_0_4"/>
<dbReference type="OrthoDB" id="9806637at2"/>
<dbReference type="Proteomes" id="UP000008210">
    <property type="component" value="Chromosome 1"/>
</dbReference>
<dbReference type="GO" id="GO:0005737">
    <property type="term" value="C:cytoplasm"/>
    <property type="evidence" value="ECO:0007669"/>
    <property type="project" value="UniProtKB-SubCell"/>
</dbReference>
<dbReference type="GO" id="GO:0071424">
    <property type="term" value="F:rRNA (cytosine-N4-)-methyltransferase activity"/>
    <property type="evidence" value="ECO:0007669"/>
    <property type="project" value="UniProtKB-UniRule"/>
</dbReference>
<dbReference type="GO" id="GO:0070475">
    <property type="term" value="P:rRNA base methylation"/>
    <property type="evidence" value="ECO:0007669"/>
    <property type="project" value="UniProtKB-UniRule"/>
</dbReference>
<dbReference type="Gene3D" id="1.10.150.170">
    <property type="entry name" value="Putative methyltransferase TM0872, insert domain"/>
    <property type="match status" value="1"/>
</dbReference>
<dbReference type="Gene3D" id="3.40.50.150">
    <property type="entry name" value="Vaccinia Virus protein VP39"/>
    <property type="match status" value="1"/>
</dbReference>
<dbReference type="HAMAP" id="MF_01007">
    <property type="entry name" value="16SrRNA_methyltr_H"/>
    <property type="match status" value="1"/>
</dbReference>
<dbReference type="InterPro" id="IPR002903">
    <property type="entry name" value="RsmH"/>
</dbReference>
<dbReference type="InterPro" id="IPR023397">
    <property type="entry name" value="SAM-dep_MeTrfase_MraW_recog"/>
</dbReference>
<dbReference type="InterPro" id="IPR029063">
    <property type="entry name" value="SAM-dependent_MTases_sf"/>
</dbReference>
<dbReference type="NCBIfam" id="TIGR00006">
    <property type="entry name" value="16S rRNA (cytosine(1402)-N(4))-methyltransferase RsmH"/>
    <property type="match status" value="1"/>
</dbReference>
<dbReference type="PANTHER" id="PTHR11265:SF0">
    <property type="entry name" value="12S RRNA N4-METHYLCYTIDINE METHYLTRANSFERASE"/>
    <property type="match status" value="1"/>
</dbReference>
<dbReference type="PANTHER" id="PTHR11265">
    <property type="entry name" value="S-ADENOSYL-METHYLTRANSFERASE MRAW"/>
    <property type="match status" value="1"/>
</dbReference>
<dbReference type="Pfam" id="PF01795">
    <property type="entry name" value="Methyltransf_5"/>
    <property type="match status" value="1"/>
</dbReference>
<dbReference type="PIRSF" id="PIRSF004486">
    <property type="entry name" value="MraW"/>
    <property type="match status" value="1"/>
</dbReference>
<dbReference type="SUPFAM" id="SSF81799">
    <property type="entry name" value="Putative methyltransferase TM0872, insert domain"/>
    <property type="match status" value="1"/>
</dbReference>
<dbReference type="SUPFAM" id="SSF53335">
    <property type="entry name" value="S-adenosyl-L-methionine-dependent methyltransferases"/>
    <property type="match status" value="1"/>
</dbReference>
<protein>
    <recommendedName>
        <fullName evidence="1">Ribosomal RNA small subunit methyltransferase H</fullName>
        <ecNumber evidence="1">2.1.1.199</ecNumber>
    </recommendedName>
    <alternativeName>
        <fullName evidence="1">16S rRNA m(4)C1402 methyltransferase</fullName>
    </alternativeName>
    <alternativeName>
        <fullName evidence="1">rRNA (cytosine-N(4)-)-methyltransferase RsmH</fullName>
    </alternativeName>
</protein>
<comment type="function">
    <text evidence="1">Specifically methylates the N4 position of cytidine in position 1402 (C1402) of 16S rRNA.</text>
</comment>
<comment type="catalytic activity">
    <reaction evidence="1">
        <text>cytidine(1402) in 16S rRNA + S-adenosyl-L-methionine = N(4)-methylcytidine(1402) in 16S rRNA + S-adenosyl-L-homocysteine + H(+)</text>
        <dbReference type="Rhea" id="RHEA:42928"/>
        <dbReference type="Rhea" id="RHEA-COMP:10286"/>
        <dbReference type="Rhea" id="RHEA-COMP:10287"/>
        <dbReference type="ChEBI" id="CHEBI:15378"/>
        <dbReference type="ChEBI" id="CHEBI:57856"/>
        <dbReference type="ChEBI" id="CHEBI:59789"/>
        <dbReference type="ChEBI" id="CHEBI:74506"/>
        <dbReference type="ChEBI" id="CHEBI:82748"/>
        <dbReference type="EC" id="2.1.1.199"/>
    </reaction>
</comment>
<comment type="subcellular location">
    <subcellularLocation>
        <location evidence="1">Cytoplasm</location>
    </subcellularLocation>
</comment>
<comment type="similarity">
    <text evidence="1">Belongs to the methyltransferase superfamily. RsmH family.</text>
</comment>
<gene>
    <name evidence="1" type="primary">rsmH</name>
    <name type="synonym">mraW</name>
    <name type="ordered locus">H16_A3281</name>
</gene>
<keyword id="KW-0963">Cytoplasm</keyword>
<keyword id="KW-0489">Methyltransferase</keyword>
<keyword id="KW-1185">Reference proteome</keyword>
<keyword id="KW-0698">rRNA processing</keyword>
<keyword id="KW-0949">S-adenosyl-L-methionine</keyword>
<keyword id="KW-0808">Transferase</keyword>
<accession>Q0K6L6</accession>
<sequence length="333" mass="35667">MSPTGTPATPALRHRTVLLDEAVDALVWRPDGVYVDGTFGRGGHSRAVLARLGPDGALVAFDKDPAAIAEAGTIKDARFSIEHASFAAMAERLSGRGHVAGVLLDLGISSPQIDEAARGFSFRFEGPLDMRMDTTRGITAAQWLAQADEQDIARVIRDYGEERFAVQIAKAIVARRSEPGDGGPIATTADLAALVAKAVKTREKGQDPATRTFQALRIHVNQELEDLERGLKAAYELLQVGGRLVVISFHSLEDRIVKRFMAAHARPQQDADPALRRAPLRAADLPQPTLRLLGRYKPGPEEVAANPRARSAVMRVAEKLAPAATTAGGGARA</sequence>
<proteinExistence type="inferred from homology"/>
<name>RSMH_CUPNH</name>
<organism>
    <name type="scientific">Cupriavidus necator (strain ATCC 17699 / DSM 428 / KCTC 22496 / NCIMB 10442 / H16 / Stanier 337)</name>
    <name type="common">Ralstonia eutropha</name>
    <dbReference type="NCBI Taxonomy" id="381666"/>
    <lineage>
        <taxon>Bacteria</taxon>
        <taxon>Pseudomonadati</taxon>
        <taxon>Pseudomonadota</taxon>
        <taxon>Betaproteobacteria</taxon>
        <taxon>Burkholderiales</taxon>
        <taxon>Burkholderiaceae</taxon>
        <taxon>Cupriavidus</taxon>
    </lineage>
</organism>
<evidence type="ECO:0000255" key="1">
    <source>
        <dbReference type="HAMAP-Rule" id="MF_01007"/>
    </source>
</evidence>
<reference key="1">
    <citation type="journal article" date="2006" name="Nat. Biotechnol.">
        <title>Genome sequence of the bioplastic-producing 'Knallgas' bacterium Ralstonia eutropha H16.</title>
        <authorList>
            <person name="Pohlmann A."/>
            <person name="Fricke W.F."/>
            <person name="Reinecke F."/>
            <person name="Kusian B."/>
            <person name="Liesegang H."/>
            <person name="Cramm R."/>
            <person name="Eitinger T."/>
            <person name="Ewering C."/>
            <person name="Poetter M."/>
            <person name="Schwartz E."/>
            <person name="Strittmatter A."/>
            <person name="Voss I."/>
            <person name="Gottschalk G."/>
            <person name="Steinbuechel A."/>
            <person name="Friedrich B."/>
            <person name="Bowien B."/>
        </authorList>
    </citation>
    <scope>NUCLEOTIDE SEQUENCE [LARGE SCALE GENOMIC DNA]</scope>
    <source>
        <strain>ATCC 17699 / DSM 428 / KCTC 22496 / NCIMB 10442 / H16 / Stanier 337</strain>
    </source>
</reference>